<keyword id="KW-0686">Riboflavin biosynthesis</keyword>
<keyword id="KW-0808">Transferase</keyword>
<protein>
    <recommendedName>
        <fullName evidence="1">6,7-dimethyl-8-ribityllumazine synthase</fullName>
        <shortName evidence="1">DMRL synthase</shortName>
        <shortName evidence="1">LS</shortName>
        <shortName evidence="1">Lumazine synthase</shortName>
        <ecNumber evidence="1">2.5.1.78</ecNumber>
    </recommendedName>
</protein>
<comment type="function">
    <text evidence="1">Catalyzes the formation of 6,7-dimethyl-8-ribityllumazine by condensation of 5-amino-6-(D-ribitylamino)uracil with 3,4-dihydroxy-2-butanone 4-phosphate. This is the penultimate step in the biosynthesis of riboflavin.</text>
</comment>
<comment type="catalytic activity">
    <reaction evidence="1">
        <text>(2S)-2-hydroxy-3-oxobutyl phosphate + 5-amino-6-(D-ribitylamino)uracil = 6,7-dimethyl-8-(1-D-ribityl)lumazine + phosphate + 2 H2O + H(+)</text>
        <dbReference type="Rhea" id="RHEA:26152"/>
        <dbReference type="ChEBI" id="CHEBI:15377"/>
        <dbReference type="ChEBI" id="CHEBI:15378"/>
        <dbReference type="ChEBI" id="CHEBI:15934"/>
        <dbReference type="ChEBI" id="CHEBI:43474"/>
        <dbReference type="ChEBI" id="CHEBI:58201"/>
        <dbReference type="ChEBI" id="CHEBI:58830"/>
        <dbReference type="EC" id="2.5.1.78"/>
    </reaction>
</comment>
<comment type="pathway">
    <text evidence="1">Cofactor biosynthesis; riboflavin biosynthesis; riboflavin from 2-hydroxy-3-oxobutyl phosphate and 5-amino-6-(D-ribitylamino)uracil: step 1/2.</text>
</comment>
<comment type="similarity">
    <text evidence="1">Belongs to the DMRL synthase family.</text>
</comment>
<proteinExistence type="inferred from homology"/>
<name>RISB_PAEAT</name>
<reference key="1">
    <citation type="journal article" date="2006" name="PLoS Genet.">
        <title>Secrets of soil survival revealed by the genome sequence of Arthrobacter aurescens TC1.</title>
        <authorList>
            <person name="Mongodin E.F."/>
            <person name="Shapir N."/>
            <person name="Daugherty S.C."/>
            <person name="DeBoy R.T."/>
            <person name="Emerson J.B."/>
            <person name="Shvartzbeyn A."/>
            <person name="Radune D."/>
            <person name="Vamathevan J."/>
            <person name="Riggs F."/>
            <person name="Grinberg V."/>
            <person name="Khouri H.M."/>
            <person name="Wackett L.P."/>
            <person name="Nelson K.E."/>
            <person name="Sadowsky M.J."/>
        </authorList>
    </citation>
    <scope>NUCLEOTIDE SEQUENCE [LARGE SCALE GENOMIC DNA]</scope>
    <source>
        <strain>TC1</strain>
    </source>
</reference>
<sequence>MSGHGAPTIDLTTLNPEEASQLKLAIVAASWHTQIMDGLVDGALRAAKEAGIAEPTLLRVPGSFELPVAAARLAPHFDAVVALGVVIRGGTPHFDYVCQAATSGLTDVSVRTGVPVGFGVLTCDTEQQGIDRAGLPGSKEDKGHEAVTAALATAVTLKQFS</sequence>
<evidence type="ECO:0000255" key="1">
    <source>
        <dbReference type="HAMAP-Rule" id="MF_00178"/>
    </source>
</evidence>
<accession>A1R5R8</accession>
<dbReference type="EC" id="2.5.1.78" evidence="1"/>
<dbReference type="EMBL" id="CP000474">
    <property type="protein sequence ID" value="ABM10198.1"/>
    <property type="molecule type" value="Genomic_DNA"/>
</dbReference>
<dbReference type="RefSeq" id="WP_011774524.1">
    <property type="nucleotide sequence ID" value="NC_008711.1"/>
</dbReference>
<dbReference type="SMR" id="A1R5R8"/>
<dbReference type="STRING" id="290340.AAur_1829"/>
<dbReference type="KEGG" id="aau:AAur_1829"/>
<dbReference type="eggNOG" id="COG0054">
    <property type="taxonomic scope" value="Bacteria"/>
</dbReference>
<dbReference type="HOGENOM" id="CLU_089358_1_2_11"/>
<dbReference type="OrthoDB" id="9809709at2"/>
<dbReference type="UniPathway" id="UPA00275">
    <property type="reaction ID" value="UER00404"/>
</dbReference>
<dbReference type="Proteomes" id="UP000000637">
    <property type="component" value="Chromosome"/>
</dbReference>
<dbReference type="GO" id="GO:0005829">
    <property type="term" value="C:cytosol"/>
    <property type="evidence" value="ECO:0007669"/>
    <property type="project" value="TreeGrafter"/>
</dbReference>
<dbReference type="GO" id="GO:0009349">
    <property type="term" value="C:riboflavin synthase complex"/>
    <property type="evidence" value="ECO:0007669"/>
    <property type="project" value="InterPro"/>
</dbReference>
<dbReference type="GO" id="GO:0000906">
    <property type="term" value="F:6,7-dimethyl-8-ribityllumazine synthase activity"/>
    <property type="evidence" value="ECO:0007669"/>
    <property type="project" value="UniProtKB-UniRule"/>
</dbReference>
<dbReference type="GO" id="GO:0009231">
    <property type="term" value="P:riboflavin biosynthetic process"/>
    <property type="evidence" value="ECO:0007669"/>
    <property type="project" value="UniProtKB-UniRule"/>
</dbReference>
<dbReference type="CDD" id="cd09209">
    <property type="entry name" value="Lumazine_synthase-I"/>
    <property type="match status" value="1"/>
</dbReference>
<dbReference type="Gene3D" id="3.40.50.960">
    <property type="entry name" value="Lumazine/riboflavin synthase"/>
    <property type="match status" value="1"/>
</dbReference>
<dbReference type="HAMAP" id="MF_00178">
    <property type="entry name" value="Lumazine_synth"/>
    <property type="match status" value="1"/>
</dbReference>
<dbReference type="InterPro" id="IPR034964">
    <property type="entry name" value="LS"/>
</dbReference>
<dbReference type="InterPro" id="IPR002180">
    <property type="entry name" value="LS/RS"/>
</dbReference>
<dbReference type="InterPro" id="IPR036467">
    <property type="entry name" value="LS/RS_sf"/>
</dbReference>
<dbReference type="NCBIfam" id="TIGR00114">
    <property type="entry name" value="lumazine-synth"/>
    <property type="match status" value="1"/>
</dbReference>
<dbReference type="PANTHER" id="PTHR21058:SF0">
    <property type="entry name" value="6,7-DIMETHYL-8-RIBITYLLUMAZINE SYNTHASE"/>
    <property type="match status" value="1"/>
</dbReference>
<dbReference type="PANTHER" id="PTHR21058">
    <property type="entry name" value="6,7-DIMETHYL-8-RIBITYLLUMAZINE SYNTHASE DMRL SYNTHASE LUMAZINE SYNTHASE"/>
    <property type="match status" value="1"/>
</dbReference>
<dbReference type="Pfam" id="PF00885">
    <property type="entry name" value="DMRL_synthase"/>
    <property type="match status" value="1"/>
</dbReference>
<dbReference type="SUPFAM" id="SSF52121">
    <property type="entry name" value="Lumazine synthase"/>
    <property type="match status" value="1"/>
</dbReference>
<organism>
    <name type="scientific">Paenarthrobacter aurescens (strain TC1)</name>
    <dbReference type="NCBI Taxonomy" id="290340"/>
    <lineage>
        <taxon>Bacteria</taxon>
        <taxon>Bacillati</taxon>
        <taxon>Actinomycetota</taxon>
        <taxon>Actinomycetes</taxon>
        <taxon>Micrococcales</taxon>
        <taxon>Micrococcaceae</taxon>
        <taxon>Paenarthrobacter</taxon>
    </lineage>
</organism>
<gene>
    <name evidence="1" type="primary">ribH</name>
    <name type="ordered locus">AAur_1829</name>
</gene>
<feature type="chain" id="PRO_1000077224" description="6,7-dimethyl-8-ribityllumazine synthase">
    <location>
        <begin position="1"/>
        <end position="161"/>
    </location>
</feature>
<feature type="active site" description="Proton donor" evidence="1">
    <location>
        <position position="93"/>
    </location>
</feature>
<feature type="binding site" evidence="1">
    <location>
        <position position="31"/>
    </location>
    <ligand>
        <name>5-amino-6-(D-ribitylamino)uracil</name>
        <dbReference type="ChEBI" id="CHEBI:15934"/>
    </ligand>
</feature>
<feature type="binding site" evidence="1">
    <location>
        <begin position="63"/>
        <end position="65"/>
    </location>
    <ligand>
        <name>5-amino-6-(D-ribitylamino)uracil</name>
        <dbReference type="ChEBI" id="CHEBI:15934"/>
    </ligand>
</feature>
<feature type="binding site" evidence="1">
    <location>
        <begin position="85"/>
        <end position="87"/>
    </location>
    <ligand>
        <name>5-amino-6-(D-ribitylamino)uracil</name>
        <dbReference type="ChEBI" id="CHEBI:15934"/>
    </ligand>
</feature>
<feature type="binding site" evidence="1">
    <location>
        <begin position="90"/>
        <end position="91"/>
    </location>
    <ligand>
        <name>(2S)-2-hydroxy-3-oxobutyl phosphate</name>
        <dbReference type="ChEBI" id="CHEBI:58830"/>
    </ligand>
</feature>
<feature type="binding site" evidence="1">
    <location>
        <position position="118"/>
    </location>
    <ligand>
        <name>5-amino-6-(D-ribitylamino)uracil</name>
        <dbReference type="ChEBI" id="CHEBI:15934"/>
    </ligand>
</feature>
<feature type="binding site" evidence="1">
    <location>
        <position position="132"/>
    </location>
    <ligand>
        <name>(2S)-2-hydroxy-3-oxobutyl phosphate</name>
        <dbReference type="ChEBI" id="CHEBI:58830"/>
    </ligand>
</feature>